<sequence length="713" mass="76279">MAAAAAAVVGWLGWVLAAFCLGSTAGEAAPAPGAGLLNFCTEEDSAPGAGSLRGRAAPEATLCLRLFCSGLANSSWTWVAAEGAGCPEGGRATEPEEAAAPTGEWRALLRLRAEAGHPRSALLAVRVEPGGGAAEEAAPPWALGLGAAGLLALAAVARGLQLSALALAPAEVQVLRESGSEAERAAARRLEPARRWAGCALGALLLLASLAQAALAVLLYGAAGQRAVPAVLGCAGLVFLVGEVLPAAVSGRWALALAPRALGLSRLAVLLTLPVALPVGQLLELAARPGRLRERVLELARGGGDPYSDLSKGVLRSRTVEDVLTPLEDCFMLDSGTVLDFSVLASIMQSGHTRIPVYEEERSNIVDMLYLKDLAIVEPEDCTPLSTITRFYNHPLHFVFNDTKLDAVLEEFKRGKSHLAIVQKVNNEGEGDPFYEVLGLVTLEDVIEEIIKSEILDESEDYSDTKVRKKTVALGAPLKRKEEFSLFKVSDDEYKVKISPQLLLATQRFLSREVDVFSPLRVSEKVLLHLLKHPSVNQEVTFDESNRLAAHHYLYQRSQPVDYFILILQGRVEVEIGKEGLKFENGAFTYYGVSALTAPSSAHQSPVSSRQLIRHDVQPEPADGTRSCTYCPDYTVRALSDLQLIKVTRLQYLNALLATRAQSLPPSPENAELQAIPGSQTRLLGDKSRETAGSTNSRPSIPVEESPGRNPGV</sequence>
<proteinExistence type="evidence at protein level"/>
<gene>
    <name type="primary">Cnnm3</name>
    <name type="synonym">Acdp3</name>
</gene>
<accession>Q32NY4</accession>
<accession>A3KML7</accession>
<accession>Q3UFE5</accession>
<accession>Q7TSZ4</accession>
<accession>Q8C342</accession>
<accession>Q9JIM6</accession>
<evidence type="ECO:0000250" key="1"/>
<evidence type="ECO:0000250" key="2">
    <source>
        <dbReference type="UniProtKB" id="Q8NE01"/>
    </source>
</evidence>
<evidence type="ECO:0000255" key="3"/>
<evidence type="ECO:0000255" key="4">
    <source>
        <dbReference type="PROSITE-ProRule" id="PRU00703"/>
    </source>
</evidence>
<evidence type="ECO:0000255" key="5">
    <source>
        <dbReference type="PROSITE-ProRule" id="PRU01193"/>
    </source>
</evidence>
<evidence type="ECO:0000256" key="6">
    <source>
        <dbReference type="SAM" id="MobiDB-lite"/>
    </source>
</evidence>
<evidence type="ECO:0000269" key="7">
    <source>
    </source>
</evidence>
<evidence type="ECO:0000303" key="8">
    <source>
    </source>
</evidence>
<evidence type="ECO:0000303" key="9">
    <source>
    </source>
</evidence>
<evidence type="ECO:0000305" key="10"/>
<evidence type="ECO:0007744" key="11">
    <source>
    </source>
</evidence>
<evidence type="ECO:0007744" key="12">
    <source>
    </source>
</evidence>
<evidence type="ECO:0007829" key="13">
    <source>
        <dbReference type="PDB" id="5K24"/>
    </source>
</evidence>
<comment type="function">
    <text evidence="1">Probable metal transporter.</text>
</comment>
<comment type="subcellular location">
    <subcellularLocation>
        <location evidence="1">Cell membrane</location>
        <topology evidence="1">Multi-pass membrane protein</topology>
    </subcellularLocation>
</comment>
<comment type="alternative products">
    <event type="alternative splicing"/>
    <isoform>
        <id>Q32NY4-1</id>
        <name>1</name>
        <sequence type="displayed"/>
    </isoform>
    <isoform>
        <id>Q32NY4-2</id>
        <name>2</name>
        <sequence type="described" ref="VSP_027084"/>
    </isoform>
</comment>
<comment type="tissue specificity">
    <text evidence="7">Widely expressed with highest levels in brain, kidney, liver, lung and heart.</text>
</comment>
<comment type="miscellaneous">
    <text>Shares weak sequence similarity with the cyclin family, hence its name. However, it has no cyclin-like function in vivo.</text>
</comment>
<comment type="similarity">
    <text evidence="10">Belongs to the ACDP family.</text>
</comment>
<comment type="sequence caution" evidence="10">
    <conflict type="erroneous initiation">
        <sequence resource="EMBL-CDS" id="AAF86376"/>
    </conflict>
    <text>Truncated N-terminus.</text>
</comment>
<comment type="sequence caution" evidence="10">
    <conflict type="erroneous initiation">
        <sequence resource="EMBL-CDS" id="AAI08418"/>
    </conflict>
    <text>Extended N-terminus.</text>
</comment>
<organism>
    <name type="scientific">Mus musculus</name>
    <name type="common">Mouse</name>
    <dbReference type="NCBI Taxonomy" id="10090"/>
    <lineage>
        <taxon>Eukaryota</taxon>
        <taxon>Metazoa</taxon>
        <taxon>Chordata</taxon>
        <taxon>Craniata</taxon>
        <taxon>Vertebrata</taxon>
        <taxon>Euteleostomi</taxon>
        <taxon>Mammalia</taxon>
        <taxon>Eutheria</taxon>
        <taxon>Euarchontoglires</taxon>
        <taxon>Glires</taxon>
        <taxon>Rodentia</taxon>
        <taxon>Myomorpha</taxon>
        <taxon>Muroidea</taxon>
        <taxon>Muridae</taxon>
        <taxon>Murinae</taxon>
        <taxon>Mus</taxon>
        <taxon>Mus</taxon>
    </lineage>
</organism>
<dbReference type="EMBL" id="AC084391">
    <property type="status" value="NOT_ANNOTATED_CDS"/>
    <property type="molecule type" value="Genomic_DNA"/>
</dbReference>
<dbReference type="EMBL" id="BC052714">
    <property type="protein sequence ID" value="AAH52714.1"/>
    <property type="molecule type" value="mRNA"/>
</dbReference>
<dbReference type="EMBL" id="BC108417">
    <property type="protein sequence ID" value="AAI08418.1"/>
    <property type="status" value="ALT_INIT"/>
    <property type="molecule type" value="mRNA"/>
</dbReference>
<dbReference type="EMBL" id="BC132285">
    <property type="protein sequence ID" value="AAI32286.1"/>
    <property type="molecule type" value="mRNA"/>
</dbReference>
<dbReference type="EMBL" id="AF216964">
    <property type="protein sequence ID" value="AAF86376.1"/>
    <property type="status" value="ALT_INIT"/>
    <property type="molecule type" value="mRNA"/>
</dbReference>
<dbReference type="EMBL" id="AK087028">
    <property type="protein sequence ID" value="BAC39785.1"/>
    <property type="molecule type" value="mRNA"/>
</dbReference>
<dbReference type="EMBL" id="AK148549">
    <property type="protein sequence ID" value="BAE28616.1"/>
    <property type="molecule type" value="mRNA"/>
</dbReference>
<dbReference type="CCDS" id="CCDS14880.1">
    <molecule id="Q32NY4-1"/>
</dbReference>
<dbReference type="CCDS" id="CCDS14881.1">
    <molecule id="Q32NY4-2"/>
</dbReference>
<dbReference type="RefSeq" id="NP_001034640.1">
    <molecule id="Q32NY4-2"/>
    <property type="nucleotide sequence ID" value="NM_001039551.2"/>
</dbReference>
<dbReference type="RefSeq" id="NP_001318138.1">
    <property type="nucleotide sequence ID" value="NM_001331209.1"/>
</dbReference>
<dbReference type="RefSeq" id="NP_444416.2">
    <molecule id="Q32NY4-1"/>
    <property type="nucleotide sequence ID" value="NM_053186.3"/>
</dbReference>
<dbReference type="PDB" id="5K24">
    <property type="method" value="X-ray"/>
    <property type="resolution" value="3.10 A"/>
    <property type="chains" value="C/D=315-456"/>
</dbReference>
<dbReference type="PDBsum" id="5K24"/>
<dbReference type="SMR" id="Q32NY4"/>
<dbReference type="BioGRID" id="220475">
    <property type="interactions" value="2"/>
</dbReference>
<dbReference type="FunCoup" id="Q32NY4">
    <property type="interactions" value="349"/>
</dbReference>
<dbReference type="STRING" id="10090.ENSMUSP00000001166"/>
<dbReference type="TCDB" id="1.A.112.1.2">
    <property type="family name" value="the cyclin m mg2+ exporter (cnnm) family"/>
</dbReference>
<dbReference type="GlyCosmos" id="Q32NY4">
    <property type="glycosylation" value="1 site, No reported glycans"/>
</dbReference>
<dbReference type="GlyGen" id="Q32NY4">
    <property type="glycosylation" value="1 site"/>
</dbReference>
<dbReference type="iPTMnet" id="Q32NY4"/>
<dbReference type="PhosphoSitePlus" id="Q32NY4"/>
<dbReference type="SwissPalm" id="Q32NY4"/>
<dbReference type="jPOST" id="Q32NY4"/>
<dbReference type="PaxDb" id="10090-ENSMUSP00000001166"/>
<dbReference type="PeptideAtlas" id="Q32NY4"/>
<dbReference type="ProteomicsDB" id="283405">
    <molecule id="Q32NY4-1"/>
</dbReference>
<dbReference type="ProteomicsDB" id="283406">
    <molecule id="Q32NY4-2"/>
</dbReference>
<dbReference type="Pumba" id="Q32NY4"/>
<dbReference type="Antibodypedia" id="3096">
    <property type="antibodies" value="211 antibodies from 27 providers"/>
</dbReference>
<dbReference type="DNASU" id="94218"/>
<dbReference type="Ensembl" id="ENSMUST00000001166.14">
    <molecule id="Q32NY4-1"/>
    <property type="protein sequence ID" value="ENSMUSP00000001166.8"/>
    <property type="gene ID" value="ENSMUSG00000001138.14"/>
</dbReference>
<dbReference type="Ensembl" id="ENSMUST00000097776.4">
    <molecule id="Q32NY4-2"/>
    <property type="protein sequence ID" value="ENSMUSP00000095383.4"/>
    <property type="gene ID" value="ENSMUSG00000001138.14"/>
</dbReference>
<dbReference type="GeneID" id="94218"/>
<dbReference type="KEGG" id="mmu:94218"/>
<dbReference type="UCSC" id="uc007aqi.1">
    <molecule id="Q32NY4-2"/>
    <property type="organism name" value="mouse"/>
</dbReference>
<dbReference type="UCSC" id="uc007aqj.1">
    <molecule id="Q32NY4-1"/>
    <property type="organism name" value="mouse"/>
</dbReference>
<dbReference type="AGR" id="MGI:2151055"/>
<dbReference type="CTD" id="26505"/>
<dbReference type="MGI" id="MGI:2151055">
    <property type="gene designation" value="Cnnm3"/>
</dbReference>
<dbReference type="VEuPathDB" id="HostDB:ENSMUSG00000001138"/>
<dbReference type="eggNOG" id="KOG2118">
    <property type="taxonomic scope" value="Eukaryota"/>
</dbReference>
<dbReference type="GeneTree" id="ENSGT00940000161102"/>
<dbReference type="HOGENOM" id="CLU_011310_1_1_1"/>
<dbReference type="InParanoid" id="Q32NY4"/>
<dbReference type="OMA" id="KLMFMHA"/>
<dbReference type="OrthoDB" id="5353557at2759"/>
<dbReference type="PhylomeDB" id="Q32NY4"/>
<dbReference type="TreeFam" id="TF101012"/>
<dbReference type="BioGRID-ORCS" id="94218">
    <property type="hits" value="1 hit in 77 CRISPR screens"/>
</dbReference>
<dbReference type="ChiTaRS" id="Cnnm3">
    <property type="organism name" value="mouse"/>
</dbReference>
<dbReference type="PRO" id="PR:Q32NY4"/>
<dbReference type="Proteomes" id="UP000000589">
    <property type="component" value="Chromosome 1"/>
</dbReference>
<dbReference type="RNAct" id="Q32NY4">
    <property type="molecule type" value="protein"/>
</dbReference>
<dbReference type="Bgee" id="ENSMUSG00000001138">
    <property type="expression patterns" value="Expressed in aortic valve and 235 other cell types or tissues"/>
</dbReference>
<dbReference type="GO" id="GO:0005886">
    <property type="term" value="C:plasma membrane"/>
    <property type="evidence" value="ECO:0007669"/>
    <property type="project" value="UniProtKB-SubCell"/>
</dbReference>
<dbReference type="GO" id="GO:0010960">
    <property type="term" value="P:magnesium ion homeostasis"/>
    <property type="evidence" value="ECO:0007669"/>
    <property type="project" value="InterPro"/>
</dbReference>
<dbReference type="GO" id="GO:0006811">
    <property type="term" value="P:monoatomic ion transport"/>
    <property type="evidence" value="ECO:0007669"/>
    <property type="project" value="UniProtKB-KW"/>
</dbReference>
<dbReference type="CDD" id="cd04590">
    <property type="entry name" value="CBS_pair_CorC_HlyC_assoc"/>
    <property type="match status" value="1"/>
</dbReference>
<dbReference type="FunFam" id="3.10.580.10:FF:000001">
    <property type="entry name" value="Putative metal transporter CNNM3 isoform 2"/>
    <property type="match status" value="1"/>
</dbReference>
<dbReference type="Gene3D" id="3.10.580.10">
    <property type="entry name" value="CBS-domain"/>
    <property type="match status" value="1"/>
</dbReference>
<dbReference type="InterPro" id="IPR045095">
    <property type="entry name" value="ACDP"/>
</dbReference>
<dbReference type="InterPro" id="IPR000644">
    <property type="entry name" value="CBS_dom"/>
</dbReference>
<dbReference type="InterPro" id="IPR046342">
    <property type="entry name" value="CBS_dom_sf"/>
</dbReference>
<dbReference type="InterPro" id="IPR002550">
    <property type="entry name" value="CNNM"/>
</dbReference>
<dbReference type="InterPro" id="IPR044751">
    <property type="entry name" value="Ion_transp-like_CBS"/>
</dbReference>
<dbReference type="PANTHER" id="PTHR12064">
    <property type="entry name" value="METAL TRANSPORTER CNNM"/>
    <property type="match status" value="1"/>
</dbReference>
<dbReference type="PANTHER" id="PTHR12064:SF27">
    <property type="entry name" value="METAL TRANSPORTER CNNM3"/>
    <property type="match status" value="1"/>
</dbReference>
<dbReference type="Pfam" id="PF00571">
    <property type="entry name" value="CBS"/>
    <property type="match status" value="1"/>
</dbReference>
<dbReference type="SUPFAM" id="SSF54631">
    <property type="entry name" value="CBS-domain pair"/>
    <property type="match status" value="1"/>
</dbReference>
<dbReference type="PROSITE" id="PS51371">
    <property type="entry name" value="CBS"/>
    <property type="match status" value="2"/>
</dbReference>
<dbReference type="PROSITE" id="PS51846">
    <property type="entry name" value="CNNM"/>
    <property type="match status" value="1"/>
</dbReference>
<name>CNNM3_MOUSE</name>
<keyword id="KW-0002">3D-structure</keyword>
<keyword id="KW-0025">Alternative splicing</keyword>
<keyword id="KW-0129">CBS domain</keyword>
<keyword id="KW-1003">Cell membrane</keyword>
<keyword id="KW-0325">Glycoprotein</keyword>
<keyword id="KW-0406">Ion transport</keyword>
<keyword id="KW-0472">Membrane</keyword>
<keyword id="KW-0597">Phosphoprotein</keyword>
<keyword id="KW-1185">Reference proteome</keyword>
<keyword id="KW-0677">Repeat</keyword>
<keyword id="KW-0812">Transmembrane</keyword>
<keyword id="KW-1133">Transmembrane helix</keyword>
<keyword id="KW-0813">Transport</keyword>
<feature type="chain" id="PRO_0000295764" description="Metal transporter CNNM3">
    <location>
        <begin position="1"/>
        <end position="713"/>
    </location>
</feature>
<feature type="transmembrane region" description="Helical" evidence="3">
    <location>
        <begin position="7"/>
        <end position="29"/>
    </location>
</feature>
<feature type="transmembrane region" description="Helical" evidence="3">
    <location>
        <begin position="137"/>
        <end position="157"/>
    </location>
</feature>
<feature type="transmembrane region" description="Helical" evidence="3">
    <location>
        <begin position="199"/>
        <end position="219"/>
    </location>
</feature>
<feature type="transmembrane region" description="Helical" evidence="3">
    <location>
        <begin position="227"/>
        <end position="247"/>
    </location>
</feature>
<feature type="transmembrane region" description="Helical" evidence="3">
    <location>
        <begin position="267"/>
        <end position="287"/>
    </location>
</feature>
<feature type="domain" description="CNNM transmembrane" evidence="5">
    <location>
        <begin position="136"/>
        <end position="314"/>
    </location>
</feature>
<feature type="domain" description="CBS 1" evidence="4">
    <location>
        <begin position="324"/>
        <end position="385"/>
    </location>
</feature>
<feature type="domain" description="CBS 2" evidence="4">
    <location>
        <begin position="392"/>
        <end position="458"/>
    </location>
</feature>
<feature type="region of interest" description="Disordered" evidence="6">
    <location>
        <begin position="664"/>
        <end position="713"/>
    </location>
</feature>
<feature type="modified residue" description="Phosphoserine" evidence="2">
    <location>
        <position position="667"/>
    </location>
</feature>
<feature type="modified residue" description="Phosphoserine" evidence="11 12">
    <location>
        <position position="706"/>
    </location>
</feature>
<feature type="glycosylation site" description="N-linked (GlcNAc...) asparagine" evidence="3">
    <location>
        <position position="73"/>
    </location>
</feature>
<feature type="splice variant" id="VSP_027084" description="In isoform 2." evidence="8 9">
    <original>GSTNSRPSIPVEESPGRNPGV</original>
    <variation>AFPVHLSLFGTLGNCS</variation>
    <location>
        <begin position="693"/>
        <end position="713"/>
    </location>
</feature>
<feature type="sequence conflict" description="In Ref. 2; AAH52714." evidence="10" ref="2">
    <original>SD</original>
    <variation>Y</variation>
    <location>
        <begin position="463"/>
        <end position="464"/>
    </location>
</feature>
<feature type="helix" evidence="13">
    <location>
        <begin position="320"/>
        <end position="323"/>
    </location>
</feature>
<feature type="helix" evidence="13">
    <location>
        <begin position="327"/>
        <end position="329"/>
    </location>
</feature>
<feature type="helix" evidence="13">
    <location>
        <begin position="341"/>
        <end position="350"/>
    </location>
</feature>
<feature type="strand" evidence="13">
    <location>
        <begin position="353"/>
        <end position="358"/>
    </location>
</feature>
<feature type="strand" evidence="13">
    <location>
        <begin position="365"/>
        <end position="370"/>
    </location>
</feature>
<feature type="helix" evidence="13">
    <location>
        <begin position="371"/>
        <end position="375"/>
    </location>
</feature>
<feature type="helix" evidence="13">
    <location>
        <begin position="385"/>
        <end position="392"/>
    </location>
</feature>
<feature type="strand" evidence="13">
    <location>
        <begin position="398"/>
        <end position="400"/>
    </location>
</feature>
<feature type="helix" evidence="13">
    <location>
        <begin position="405"/>
        <end position="414"/>
    </location>
</feature>
<feature type="strand" evidence="13">
    <location>
        <begin position="418"/>
        <end position="426"/>
    </location>
</feature>
<feature type="strand" evidence="13">
    <location>
        <begin position="429"/>
        <end position="431"/>
    </location>
</feature>
<feature type="strand" evidence="13">
    <location>
        <begin position="434"/>
        <end position="442"/>
    </location>
</feature>
<feature type="helix" evidence="13">
    <location>
        <begin position="443"/>
        <end position="447"/>
    </location>
</feature>
<feature type="turn" evidence="13">
    <location>
        <begin position="448"/>
        <end position="450"/>
    </location>
</feature>
<protein>
    <recommendedName>
        <fullName>Metal transporter CNNM3</fullName>
    </recommendedName>
    <alternativeName>
        <fullName>Ancient conserved domain-containing protein 3</fullName>
        <shortName>mACDP3</shortName>
    </alternativeName>
    <alternativeName>
        <fullName>Cyclin-M3</fullName>
    </alternativeName>
</protein>
<reference key="1">
    <citation type="journal article" date="2009" name="PLoS Biol.">
        <title>Lineage-specific biology revealed by a finished genome assembly of the mouse.</title>
        <authorList>
            <person name="Church D.M."/>
            <person name="Goodstadt L."/>
            <person name="Hillier L.W."/>
            <person name="Zody M.C."/>
            <person name="Goldstein S."/>
            <person name="She X."/>
            <person name="Bult C.J."/>
            <person name="Agarwala R."/>
            <person name="Cherry J.L."/>
            <person name="DiCuccio M."/>
            <person name="Hlavina W."/>
            <person name="Kapustin Y."/>
            <person name="Meric P."/>
            <person name="Maglott D."/>
            <person name="Birtle Z."/>
            <person name="Marques A.C."/>
            <person name="Graves T."/>
            <person name="Zhou S."/>
            <person name="Teague B."/>
            <person name="Potamousis K."/>
            <person name="Churas C."/>
            <person name="Place M."/>
            <person name="Herschleb J."/>
            <person name="Runnheim R."/>
            <person name="Forrest D."/>
            <person name="Amos-Landgraf J."/>
            <person name="Schwartz D.C."/>
            <person name="Cheng Z."/>
            <person name="Lindblad-Toh K."/>
            <person name="Eichler E.E."/>
            <person name="Ponting C.P."/>
        </authorList>
    </citation>
    <scope>NUCLEOTIDE SEQUENCE [LARGE SCALE GENOMIC DNA]</scope>
    <source>
        <strain>C57BL/6J</strain>
    </source>
</reference>
<reference key="2">
    <citation type="journal article" date="2004" name="Genome Res.">
        <title>The status, quality, and expansion of the NIH full-length cDNA project: the Mammalian Gene Collection (MGC).</title>
        <authorList>
            <consortium name="The MGC Project Team"/>
        </authorList>
    </citation>
    <scope>NUCLEOTIDE SEQUENCE [LARGE SCALE MRNA] OF 246-713 (ISOFORM 2)</scope>
    <scope>NUCLEOTIDE SEQUENCE [LARGE SCALE MRNA] OF 300-713 (ISOFORM 1)</scope>
    <source>
        <strain>C57BL/6J</strain>
        <tissue>Brain</tissue>
    </source>
</reference>
<reference key="3">
    <citation type="journal article" date="2004" name="BMC Genomics">
        <title>Molecular cloning and characterization of the mouse Acdp gene family.</title>
        <authorList>
            <person name="Wang C.-Y."/>
            <person name="Yang P."/>
            <person name="Shi J.-D."/>
            <person name="Purohit S."/>
            <person name="Guo D."/>
            <person name="An H."/>
            <person name="Gu J.-G."/>
            <person name="Ling J."/>
            <person name="Dong Z."/>
            <person name="She J.-X."/>
        </authorList>
    </citation>
    <scope>NUCLEOTIDE SEQUENCE [MRNA] OF 300-713 (ISOFORM 1)</scope>
    <source>
        <strain>C57BL/6J</strain>
        <tissue>Brain</tissue>
    </source>
</reference>
<reference key="4">
    <citation type="journal article" date="2005" name="Science">
        <title>The transcriptional landscape of the mammalian genome.</title>
        <authorList>
            <person name="Carninci P."/>
            <person name="Kasukawa T."/>
            <person name="Katayama S."/>
            <person name="Gough J."/>
            <person name="Frith M.C."/>
            <person name="Maeda N."/>
            <person name="Oyama R."/>
            <person name="Ravasi T."/>
            <person name="Lenhard B."/>
            <person name="Wells C."/>
            <person name="Kodzius R."/>
            <person name="Shimokawa K."/>
            <person name="Bajic V.B."/>
            <person name="Brenner S.E."/>
            <person name="Batalov S."/>
            <person name="Forrest A.R."/>
            <person name="Zavolan M."/>
            <person name="Davis M.J."/>
            <person name="Wilming L.G."/>
            <person name="Aidinis V."/>
            <person name="Allen J.E."/>
            <person name="Ambesi-Impiombato A."/>
            <person name="Apweiler R."/>
            <person name="Aturaliya R.N."/>
            <person name="Bailey T.L."/>
            <person name="Bansal M."/>
            <person name="Baxter L."/>
            <person name="Beisel K.W."/>
            <person name="Bersano T."/>
            <person name="Bono H."/>
            <person name="Chalk A.M."/>
            <person name="Chiu K.P."/>
            <person name="Choudhary V."/>
            <person name="Christoffels A."/>
            <person name="Clutterbuck D.R."/>
            <person name="Crowe M.L."/>
            <person name="Dalla E."/>
            <person name="Dalrymple B.P."/>
            <person name="de Bono B."/>
            <person name="Della Gatta G."/>
            <person name="di Bernardo D."/>
            <person name="Down T."/>
            <person name="Engstrom P."/>
            <person name="Fagiolini M."/>
            <person name="Faulkner G."/>
            <person name="Fletcher C.F."/>
            <person name="Fukushima T."/>
            <person name="Furuno M."/>
            <person name="Futaki S."/>
            <person name="Gariboldi M."/>
            <person name="Georgii-Hemming P."/>
            <person name="Gingeras T.R."/>
            <person name="Gojobori T."/>
            <person name="Green R.E."/>
            <person name="Gustincich S."/>
            <person name="Harbers M."/>
            <person name="Hayashi Y."/>
            <person name="Hensch T.K."/>
            <person name="Hirokawa N."/>
            <person name="Hill D."/>
            <person name="Huminiecki L."/>
            <person name="Iacono M."/>
            <person name="Ikeo K."/>
            <person name="Iwama A."/>
            <person name="Ishikawa T."/>
            <person name="Jakt M."/>
            <person name="Kanapin A."/>
            <person name="Katoh M."/>
            <person name="Kawasawa Y."/>
            <person name="Kelso J."/>
            <person name="Kitamura H."/>
            <person name="Kitano H."/>
            <person name="Kollias G."/>
            <person name="Krishnan S.P."/>
            <person name="Kruger A."/>
            <person name="Kummerfeld S.K."/>
            <person name="Kurochkin I.V."/>
            <person name="Lareau L.F."/>
            <person name="Lazarevic D."/>
            <person name="Lipovich L."/>
            <person name="Liu J."/>
            <person name="Liuni S."/>
            <person name="McWilliam S."/>
            <person name="Madan Babu M."/>
            <person name="Madera M."/>
            <person name="Marchionni L."/>
            <person name="Matsuda H."/>
            <person name="Matsuzawa S."/>
            <person name="Miki H."/>
            <person name="Mignone F."/>
            <person name="Miyake S."/>
            <person name="Morris K."/>
            <person name="Mottagui-Tabar S."/>
            <person name="Mulder N."/>
            <person name="Nakano N."/>
            <person name="Nakauchi H."/>
            <person name="Ng P."/>
            <person name="Nilsson R."/>
            <person name="Nishiguchi S."/>
            <person name="Nishikawa S."/>
            <person name="Nori F."/>
            <person name="Ohara O."/>
            <person name="Okazaki Y."/>
            <person name="Orlando V."/>
            <person name="Pang K.C."/>
            <person name="Pavan W.J."/>
            <person name="Pavesi G."/>
            <person name="Pesole G."/>
            <person name="Petrovsky N."/>
            <person name="Piazza S."/>
            <person name="Reed J."/>
            <person name="Reid J.F."/>
            <person name="Ring B.Z."/>
            <person name="Ringwald M."/>
            <person name="Rost B."/>
            <person name="Ruan Y."/>
            <person name="Salzberg S.L."/>
            <person name="Sandelin A."/>
            <person name="Schneider C."/>
            <person name="Schoenbach C."/>
            <person name="Sekiguchi K."/>
            <person name="Semple C.A."/>
            <person name="Seno S."/>
            <person name="Sessa L."/>
            <person name="Sheng Y."/>
            <person name="Shibata Y."/>
            <person name="Shimada H."/>
            <person name="Shimada K."/>
            <person name="Silva D."/>
            <person name="Sinclair B."/>
            <person name="Sperling S."/>
            <person name="Stupka E."/>
            <person name="Sugiura K."/>
            <person name="Sultana R."/>
            <person name="Takenaka Y."/>
            <person name="Taki K."/>
            <person name="Tammoja K."/>
            <person name="Tan S.L."/>
            <person name="Tang S."/>
            <person name="Taylor M.S."/>
            <person name="Tegner J."/>
            <person name="Teichmann S.A."/>
            <person name="Ueda H.R."/>
            <person name="van Nimwegen E."/>
            <person name="Verardo R."/>
            <person name="Wei C.L."/>
            <person name="Yagi K."/>
            <person name="Yamanishi H."/>
            <person name="Zabarovsky E."/>
            <person name="Zhu S."/>
            <person name="Zimmer A."/>
            <person name="Hide W."/>
            <person name="Bult C."/>
            <person name="Grimmond S.M."/>
            <person name="Teasdale R.D."/>
            <person name="Liu E.T."/>
            <person name="Brusic V."/>
            <person name="Quackenbush J."/>
            <person name="Wahlestedt C."/>
            <person name="Mattick J.S."/>
            <person name="Hume D.A."/>
            <person name="Kai C."/>
            <person name="Sasaki D."/>
            <person name="Tomaru Y."/>
            <person name="Fukuda S."/>
            <person name="Kanamori-Katayama M."/>
            <person name="Suzuki M."/>
            <person name="Aoki J."/>
            <person name="Arakawa T."/>
            <person name="Iida J."/>
            <person name="Imamura K."/>
            <person name="Itoh M."/>
            <person name="Kato T."/>
            <person name="Kawaji H."/>
            <person name="Kawagashira N."/>
            <person name="Kawashima T."/>
            <person name="Kojima M."/>
            <person name="Kondo S."/>
            <person name="Konno H."/>
            <person name="Nakano K."/>
            <person name="Ninomiya N."/>
            <person name="Nishio T."/>
            <person name="Okada M."/>
            <person name="Plessy C."/>
            <person name="Shibata K."/>
            <person name="Shiraki T."/>
            <person name="Suzuki S."/>
            <person name="Tagami M."/>
            <person name="Waki K."/>
            <person name="Watahiki A."/>
            <person name="Okamura-Oho Y."/>
            <person name="Suzuki H."/>
            <person name="Kawai J."/>
            <person name="Hayashizaki Y."/>
        </authorList>
    </citation>
    <scope>NUCLEOTIDE SEQUENCE [LARGE SCALE MRNA] OF 601-713 (ISOFORM 2)</scope>
    <scope>NUCLEOTIDE SEQUENCE [LARGE SCALE MRNA] OF 624-713 (ISOFORM 1)</scope>
    <source>
        <strain>C57BL/6J</strain>
        <tissue>Lung</tissue>
        <tissue>Sympathetic ganglion</tissue>
    </source>
</reference>
<reference key="5">
    <citation type="journal article" date="2009" name="Immunity">
        <title>The phagosomal proteome in interferon-gamma-activated macrophages.</title>
        <authorList>
            <person name="Trost M."/>
            <person name="English L."/>
            <person name="Lemieux S."/>
            <person name="Courcelles M."/>
            <person name="Desjardins M."/>
            <person name="Thibault P."/>
        </authorList>
    </citation>
    <scope>PHOSPHORYLATION [LARGE SCALE ANALYSIS] AT SER-706</scope>
    <scope>IDENTIFICATION BY MASS SPECTROMETRY [LARGE SCALE ANALYSIS]</scope>
</reference>
<reference key="6">
    <citation type="journal article" date="2010" name="Cell">
        <title>A tissue-specific atlas of mouse protein phosphorylation and expression.</title>
        <authorList>
            <person name="Huttlin E.L."/>
            <person name="Jedrychowski M.P."/>
            <person name="Elias J.E."/>
            <person name="Goswami T."/>
            <person name="Rad R."/>
            <person name="Beausoleil S.A."/>
            <person name="Villen J."/>
            <person name="Haas W."/>
            <person name="Sowa M.E."/>
            <person name="Gygi S.P."/>
        </authorList>
    </citation>
    <scope>PHOSPHORYLATION [LARGE SCALE ANALYSIS] AT SER-706</scope>
    <scope>IDENTIFICATION BY MASS SPECTROMETRY [LARGE SCALE ANALYSIS]</scope>
    <source>
        <tissue>Brain</tissue>
        <tissue>Kidney</tissue>
        <tissue>Liver</tissue>
        <tissue>Lung</tissue>
        <tissue>Pancreas</tissue>
    </source>
</reference>
<reference key="7">
    <citation type="journal article" date="2012" name="J. Biol. Chem.">
        <title>Membrane topology and intracellular processing of Cyclin M2 (CNNM2).</title>
        <authorList>
            <person name="de Baaij J.H."/>
            <person name="Stuiver M."/>
            <person name="Meij I.C."/>
            <person name="Lainez S."/>
            <person name="Kopplin K."/>
            <person name="Venselaar H."/>
            <person name="Mueller D."/>
            <person name="Bindels R.J."/>
            <person name="Hoenderop J.G."/>
        </authorList>
    </citation>
    <scope>TISSUE SPECIFICITY</scope>
</reference>